<keyword id="KW-0686">Riboflavin biosynthesis</keyword>
<keyword id="KW-0808">Transferase</keyword>
<accession>B5ELV8</accession>
<organism>
    <name type="scientific">Acidithiobacillus ferrooxidans (strain ATCC 53993 / BNL-5-31)</name>
    <name type="common">Leptospirillum ferrooxidans (ATCC 53993)</name>
    <dbReference type="NCBI Taxonomy" id="380394"/>
    <lineage>
        <taxon>Bacteria</taxon>
        <taxon>Pseudomonadati</taxon>
        <taxon>Pseudomonadota</taxon>
        <taxon>Acidithiobacillia</taxon>
        <taxon>Acidithiobacillales</taxon>
        <taxon>Acidithiobacillaceae</taxon>
        <taxon>Acidithiobacillus</taxon>
    </lineage>
</organism>
<comment type="function">
    <text evidence="1">Catalyzes the formation of 6,7-dimethyl-8-ribityllumazine by condensation of 5-amino-6-(D-ribitylamino)uracil with 3,4-dihydroxy-2-butanone 4-phosphate. This is the penultimate step in the biosynthesis of riboflavin.</text>
</comment>
<comment type="catalytic activity">
    <reaction evidence="1">
        <text>(2S)-2-hydroxy-3-oxobutyl phosphate + 5-amino-6-(D-ribitylamino)uracil = 6,7-dimethyl-8-(1-D-ribityl)lumazine + phosphate + 2 H2O + H(+)</text>
        <dbReference type="Rhea" id="RHEA:26152"/>
        <dbReference type="ChEBI" id="CHEBI:15377"/>
        <dbReference type="ChEBI" id="CHEBI:15378"/>
        <dbReference type="ChEBI" id="CHEBI:15934"/>
        <dbReference type="ChEBI" id="CHEBI:43474"/>
        <dbReference type="ChEBI" id="CHEBI:58201"/>
        <dbReference type="ChEBI" id="CHEBI:58830"/>
        <dbReference type="EC" id="2.5.1.78"/>
    </reaction>
</comment>
<comment type="pathway">
    <text evidence="1">Cofactor biosynthesis; riboflavin biosynthesis; riboflavin from 2-hydroxy-3-oxobutyl phosphate and 5-amino-6-(D-ribitylamino)uracil: step 1/2.</text>
</comment>
<comment type="subunit">
    <text evidence="1">Forms an icosahedral capsid composed of 60 subunits, arranged as a dodecamer of pentamers.</text>
</comment>
<comment type="similarity">
    <text evidence="1">Belongs to the DMRL synthase family.</text>
</comment>
<proteinExistence type="inferred from homology"/>
<dbReference type="EC" id="2.5.1.78" evidence="1"/>
<dbReference type="EMBL" id="CP001132">
    <property type="protein sequence ID" value="ACH82730.1"/>
    <property type="molecule type" value="Genomic_DNA"/>
</dbReference>
<dbReference type="SMR" id="B5ELV8"/>
<dbReference type="KEGG" id="afe:Lferr_0476"/>
<dbReference type="eggNOG" id="COG0054">
    <property type="taxonomic scope" value="Bacteria"/>
</dbReference>
<dbReference type="HOGENOM" id="CLU_089358_1_1_6"/>
<dbReference type="UniPathway" id="UPA00275">
    <property type="reaction ID" value="UER00404"/>
</dbReference>
<dbReference type="GO" id="GO:0005829">
    <property type="term" value="C:cytosol"/>
    <property type="evidence" value="ECO:0007669"/>
    <property type="project" value="TreeGrafter"/>
</dbReference>
<dbReference type="GO" id="GO:0009349">
    <property type="term" value="C:riboflavin synthase complex"/>
    <property type="evidence" value="ECO:0007669"/>
    <property type="project" value="InterPro"/>
</dbReference>
<dbReference type="GO" id="GO:0000906">
    <property type="term" value="F:6,7-dimethyl-8-ribityllumazine synthase activity"/>
    <property type="evidence" value="ECO:0007669"/>
    <property type="project" value="UniProtKB-UniRule"/>
</dbReference>
<dbReference type="GO" id="GO:0009231">
    <property type="term" value="P:riboflavin biosynthetic process"/>
    <property type="evidence" value="ECO:0007669"/>
    <property type="project" value="UniProtKB-UniRule"/>
</dbReference>
<dbReference type="CDD" id="cd09209">
    <property type="entry name" value="Lumazine_synthase-I"/>
    <property type="match status" value="1"/>
</dbReference>
<dbReference type="FunFam" id="3.40.50.960:FF:000001">
    <property type="entry name" value="6,7-dimethyl-8-ribityllumazine synthase"/>
    <property type="match status" value="1"/>
</dbReference>
<dbReference type="Gene3D" id="3.40.50.960">
    <property type="entry name" value="Lumazine/riboflavin synthase"/>
    <property type="match status" value="1"/>
</dbReference>
<dbReference type="HAMAP" id="MF_00178">
    <property type="entry name" value="Lumazine_synth"/>
    <property type="match status" value="1"/>
</dbReference>
<dbReference type="InterPro" id="IPR034964">
    <property type="entry name" value="LS"/>
</dbReference>
<dbReference type="InterPro" id="IPR002180">
    <property type="entry name" value="LS/RS"/>
</dbReference>
<dbReference type="InterPro" id="IPR036467">
    <property type="entry name" value="LS/RS_sf"/>
</dbReference>
<dbReference type="NCBIfam" id="TIGR00114">
    <property type="entry name" value="lumazine-synth"/>
    <property type="match status" value="1"/>
</dbReference>
<dbReference type="NCBIfam" id="NF000812">
    <property type="entry name" value="PRK00061.1-4"/>
    <property type="match status" value="1"/>
</dbReference>
<dbReference type="PANTHER" id="PTHR21058:SF0">
    <property type="entry name" value="6,7-DIMETHYL-8-RIBITYLLUMAZINE SYNTHASE"/>
    <property type="match status" value="1"/>
</dbReference>
<dbReference type="PANTHER" id="PTHR21058">
    <property type="entry name" value="6,7-DIMETHYL-8-RIBITYLLUMAZINE SYNTHASE DMRL SYNTHASE LUMAZINE SYNTHASE"/>
    <property type="match status" value="1"/>
</dbReference>
<dbReference type="Pfam" id="PF00885">
    <property type="entry name" value="DMRL_synthase"/>
    <property type="match status" value="1"/>
</dbReference>
<dbReference type="SUPFAM" id="SSF52121">
    <property type="entry name" value="Lumazine synthase"/>
    <property type="match status" value="1"/>
</dbReference>
<reference key="1">
    <citation type="submission" date="2008-08" db="EMBL/GenBank/DDBJ databases">
        <title>Complete sequence of Acidithiobacillus ferrooxidans ATCC 53993.</title>
        <authorList>
            <person name="Lucas S."/>
            <person name="Copeland A."/>
            <person name="Lapidus A."/>
            <person name="Glavina del Rio T."/>
            <person name="Dalin E."/>
            <person name="Tice H."/>
            <person name="Bruce D."/>
            <person name="Goodwin L."/>
            <person name="Pitluck S."/>
            <person name="Sims D."/>
            <person name="Brettin T."/>
            <person name="Detter J.C."/>
            <person name="Han C."/>
            <person name="Kuske C.R."/>
            <person name="Larimer F."/>
            <person name="Land M."/>
            <person name="Hauser L."/>
            <person name="Kyrpides N."/>
            <person name="Lykidis A."/>
            <person name="Borole A.P."/>
        </authorList>
    </citation>
    <scope>NUCLEOTIDE SEQUENCE [LARGE SCALE GENOMIC DNA]</scope>
    <source>
        <strain>ATCC 53993 / BNL-5-31</strain>
    </source>
</reference>
<name>RISB_ACIF5</name>
<gene>
    <name evidence="1" type="primary">ribH</name>
    <name type="ordered locus">Lferr_0476</name>
</gene>
<sequence>MIRHIEGSLQAGEHRFALLVSRFNSFITQQLEQGAIDALRRHGAKEEQLHVVHVPGAYEMPLIAQKLARSGNYDAVLCLGAVIRGGTPHFDYVAAEVSKGVAQVSMDTGVPVIFGVLTTDSIEQAIERAGTKAGNKGFDAAMTALEMVQLLRQI</sequence>
<evidence type="ECO:0000255" key="1">
    <source>
        <dbReference type="HAMAP-Rule" id="MF_00178"/>
    </source>
</evidence>
<feature type="chain" id="PRO_1000098157" description="6,7-dimethyl-8-ribityllumazine synthase">
    <location>
        <begin position="1"/>
        <end position="154"/>
    </location>
</feature>
<feature type="active site" description="Proton donor" evidence="1">
    <location>
        <position position="89"/>
    </location>
</feature>
<feature type="binding site" evidence="1">
    <location>
        <position position="23"/>
    </location>
    <ligand>
        <name>5-amino-6-(D-ribitylamino)uracil</name>
        <dbReference type="ChEBI" id="CHEBI:15934"/>
    </ligand>
</feature>
<feature type="binding site" evidence="1">
    <location>
        <begin position="57"/>
        <end position="59"/>
    </location>
    <ligand>
        <name>5-amino-6-(D-ribitylamino)uracil</name>
        <dbReference type="ChEBI" id="CHEBI:15934"/>
    </ligand>
</feature>
<feature type="binding site" evidence="1">
    <location>
        <begin position="81"/>
        <end position="83"/>
    </location>
    <ligand>
        <name>5-amino-6-(D-ribitylamino)uracil</name>
        <dbReference type="ChEBI" id="CHEBI:15934"/>
    </ligand>
</feature>
<feature type="binding site" evidence="1">
    <location>
        <begin position="86"/>
        <end position="87"/>
    </location>
    <ligand>
        <name>(2S)-2-hydroxy-3-oxobutyl phosphate</name>
        <dbReference type="ChEBI" id="CHEBI:58830"/>
    </ligand>
</feature>
<feature type="binding site" evidence="1">
    <location>
        <position position="114"/>
    </location>
    <ligand>
        <name>5-amino-6-(D-ribitylamino)uracil</name>
        <dbReference type="ChEBI" id="CHEBI:15934"/>
    </ligand>
</feature>
<feature type="binding site" evidence="1">
    <location>
        <position position="128"/>
    </location>
    <ligand>
        <name>(2S)-2-hydroxy-3-oxobutyl phosphate</name>
        <dbReference type="ChEBI" id="CHEBI:58830"/>
    </ligand>
</feature>
<protein>
    <recommendedName>
        <fullName evidence="1">6,7-dimethyl-8-ribityllumazine synthase</fullName>
        <shortName evidence="1">DMRL synthase</shortName>
        <shortName evidence="1">LS</shortName>
        <shortName evidence="1">Lumazine synthase</shortName>
        <ecNumber evidence="1">2.5.1.78</ecNumber>
    </recommendedName>
</protein>